<sequence>MADLGAEDKLKQICDALRIETLKPAEDEADAIVRNAKEQAKRIIDEAQERAAQIIASAKEEADFKLRQGESALAQAGKRSLESLKQAVENKVFKESLAEWLDNALADPEVSAKLVAALIQAIEDKGISGDLTAYIGKHVATRTVNEFLGKTILAKLRGKGVAVGSFVGGVQLKVEDKNWVLDLSSDTLLDLLMRYLQKDFREMIFQGS</sequence>
<feature type="chain" id="PRO_1000059404" description="V-type ATP synthase subunit E">
    <location>
        <begin position="1"/>
        <end position="208"/>
    </location>
</feature>
<keyword id="KW-0066">ATP synthesis</keyword>
<keyword id="KW-0375">Hydrogen ion transport</keyword>
<keyword id="KW-0406">Ion transport</keyword>
<keyword id="KW-0813">Transport</keyword>
<name>VATE_CHLFF</name>
<accession>Q255E1</accession>
<comment type="function">
    <text evidence="1">Produces ATP from ADP in the presence of a proton gradient across the membrane.</text>
</comment>
<comment type="similarity">
    <text evidence="1">Belongs to the V-ATPase E subunit family.</text>
</comment>
<evidence type="ECO:0000255" key="1">
    <source>
        <dbReference type="HAMAP-Rule" id="MF_00311"/>
    </source>
</evidence>
<reference key="1">
    <citation type="journal article" date="2006" name="DNA Res.">
        <title>Genome sequence of the cat pathogen, Chlamydophila felis.</title>
        <authorList>
            <person name="Azuma Y."/>
            <person name="Hirakawa H."/>
            <person name="Yamashita A."/>
            <person name="Cai Y."/>
            <person name="Rahman M.A."/>
            <person name="Suzuki H."/>
            <person name="Mitaku S."/>
            <person name="Toh H."/>
            <person name="Goto S."/>
            <person name="Murakami T."/>
            <person name="Sugi K."/>
            <person name="Hayashi H."/>
            <person name="Fukushi H."/>
            <person name="Hattori M."/>
            <person name="Kuhara S."/>
            <person name="Shirai M."/>
        </authorList>
    </citation>
    <scope>NUCLEOTIDE SEQUENCE [LARGE SCALE GENOMIC DNA]</scope>
    <source>
        <strain>Fe/C-56</strain>
    </source>
</reference>
<organism>
    <name type="scientific">Chlamydia felis (strain Fe/C-56)</name>
    <name type="common">Chlamydophila felis</name>
    <dbReference type="NCBI Taxonomy" id="264202"/>
    <lineage>
        <taxon>Bacteria</taxon>
        <taxon>Pseudomonadati</taxon>
        <taxon>Chlamydiota</taxon>
        <taxon>Chlamydiia</taxon>
        <taxon>Chlamydiales</taxon>
        <taxon>Chlamydiaceae</taxon>
        <taxon>Chlamydia/Chlamydophila group</taxon>
        <taxon>Chlamydia</taxon>
    </lineage>
</organism>
<gene>
    <name evidence="1" type="primary">atpE</name>
    <name type="ordered locus">CF0325</name>
</gene>
<dbReference type="EMBL" id="AP006861">
    <property type="protein sequence ID" value="BAE81097.1"/>
    <property type="molecule type" value="Genomic_DNA"/>
</dbReference>
<dbReference type="RefSeq" id="WP_011457877.1">
    <property type="nucleotide sequence ID" value="NC_007899.1"/>
</dbReference>
<dbReference type="SMR" id="Q255E1"/>
<dbReference type="STRING" id="264202.CF0325"/>
<dbReference type="KEGG" id="cfe:CF0325"/>
<dbReference type="eggNOG" id="COG1390">
    <property type="taxonomic scope" value="Bacteria"/>
</dbReference>
<dbReference type="HOGENOM" id="CLU_1314973_0_0_0"/>
<dbReference type="OrthoDB" id="21003at2"/>
<dbReference type="Proteomes" id="UP000001260">
    <property type="component" value="Chromosome"/>
</dbReference>
<dbReference type="GO" id="GO:0033178">
    <property type="term" value="C:proton-transporting two-sector ATPase complex, catalytic domain"/>
    <property type="evidence" value="ECO:0007669"/>
    <property type="project" value="InterPro"/>
</dbReference>
<dbReference type="GO" id="GO:0005524">
    <property type="term" value="F:ATP binding"/>
    <property type="evidence" value="ECO:0007669"/>
    <property type="project" value="UniProtKB-UniRule"/>
</dbReference>
<dbReference type="GO" id="GO:0046933">
    <property type="term" value="F:proton-transporting ATP synthase activity, rotational mechanism"/>
    <property type="evidence" value="ECO:0007669"/>
    <property type="project" value="UniProtKB-UniRule"/>
</dbReference>
<dbReference type="GO" id="GO:0046961">
    <property type="term" value="F:proton-transporting ATPase activity, rotational mechanism"/>
    <property type="evidence" value="ECO:0007669"/>
    <property type="project" value="InterPro"/>
</dbReference>
<dbReference type="GO" id="GO:0042777">
    <property type="term" value="P:proton motive force-driven plasma membrane ATP synthesis"/>
    <property type="evidence" value="ECO:0007669"/>
    <property type="project" value="UniProtKB-UniRule"/>
</dbReference>
<dbReference type="Gene3D" id="1.20.5.2950">
    <property type="match status" value="1"/>
</dbReference>
<dbReference type="HAMAP" id="MF_00311">
    <property type="entry name" value="ATP_synth_E_arch"/>
    <property type="match status" value="1"/>
</dbReference>
<dbReference type="InterPro" id="IPR002842">
    <property type="entry name" value="ATPase_V1_Esu"/>
</dbReference>
<dbReference type="InterPro" id="IPR009335">
    <property type="entry name" value="T3SS_HrpE/ATPase_suE"/>
</dbReference>
<dbReference type="NCBIfam" id="NF002170">
    <property type="entry name" value="PRK01005.1"/>
    <property type="match status" value="1"/>
</dbReference>
<dbReference type="Pfam" id="PF06188">
    <property type="entry name" value="HrpE"/>
    <property type="match status" value="1"/>
</dbReference>
<protein>
    <recommendedName>
        <fullName>V-type ATP synthase subunit E</fullName>
    </recommendedName>
    <alternativeName>
        <fullName evidence="1">V-ATPase subunit E</fullName>
    </alternativeName>
</protein>
<proteinExistence type="inferred from homology"/>